<comment type="function">
    <text>Regulates the coordinate transcription of structural MAL3S (maltase) and MAL3T (maltose permease) genes.</text>
</comment>
<comment type="subcellular location">
    <subcellularLocation>
        <location>Nucleus</location>
    </subcellularLocation>
</comment>
<comment type="similarity">
    <text evidence="3">Belongs to the MAL13 family.</text>
</comment>
<gene>
    <name type="primary">MAL33</name>
    <name type="synonym">MAL3R</name>
    <name type="ordered locus">YBR297W</name>
    <name type="ORF">YBR2115</name>
</gene>
<sequence length="468" mass="54194">MTLVKYACDYCRVRRVKCDGKKPCSRCIEHNFDCTYQQPLKKRGSKPIGTRSLKYIPKAKMFIDNKSCTAAAEILMKVPKKVIDQCLRLYHDNLYVIWPLLSYDDLHKLLDEEYNDHYVYWFLVALSAANLSDLQSELESEGGFSFTGKQLAVLCMSSRQQFDDLSGRDIFRIMTYYCLLRCFSQSSDVRNSYRLCREAIGLVIVAGLHREKAYESLSFREQQLLRKVYYLLLLTERYYSVYVHCVTSLDTTIAPPQPEFVTDPRLSLDSFFEMIRVFTVPGKCFFDALATESTSGSCTEDSLKKIWKELHTASLEIEPWSYGYVDISFSRHWIRALAWKLVFQMNGTKFFSNANNAHILVEIAKDMLDDIFLTPNNLYDVHGPGIPMKSLEVANALVDIVNKYDHNMKLEAWNILCDVSKFVFSLKHCNHKMFQRFSTKCQSALIDLPISRPLRLNDDSKDEDDIIP</sequence>
<feature type="chain" id="PRO_0000114957" description="Maltose fermentation regulatory protein MAL33">
    <location>
        <begin position="1"/>
        <end position="468"/>
    </location>
</feature>
<feature type="DNA-binding region" description="Zn(2)-C6 fungal-type" evidence="2">
    <location>
        <begin position="8"/>
        <end position="34"/>
    </location>
</feature>
<feature type="short sequence motif" description="Nuclear localization signal" evidence="1">
    <location>
        <begin position="41"/>
        <end position="49"/>
    </location>
</feature>
<organism>
    <name type="scientific">Saccharomyces cerevisiae (strain ATCC 204508 / S288c)</name>
    <name type="common">Baker's yeast</name>
    <dbReference type="NCBI Taxonomy" id="559292"/>
    <lineage>
        <taxon>Eukaryota</taxon>
        <taxon>Fungi</taxon>
        <taxon>Dikarya</taxon>
        <taxon>Ascomycota</taxon>
        <taxon>Saccharomycotina</taxon>
        <taxon>Saccharomycetes</taxon>
        <taxon>Saccharomycetales</taxon>
        <taxon>Saccharomycetaceae</taxon>
        <taxon>Saccharomyces</taxon>
    </lineage>
</organism>
<accession>P38157</accession>
<accession>D6VQU2</accession>
<protein>
    <recommendedName>
        <fullName>Maltose fermentation regulatory protein MAL33</fullName>
    </recommendedName>
</protein>
<keyword id="KW-0010">Activator</keyword>
<keyword id="KW-0238">DNA-binding</keyword>
<keyword id="KW-0462">Maltose metabolism</keyword>
<keyword id="KW-0479">Metal-binding</keyword>
<keyword id="KW-0539">Nucleus</keyword>
<keyword id="KW-1185">Reference proteome</keyword>
<keyword id="KW-0804">Transcription</keyword>
<keyword id="KW-0805">Transcription regulation</keyword>
<keyword id="KW-0862">Zinc</keyword>
<proteinExistence type="inferred from homology"/>
<name>MAL33_YEAST</name>
<dbReference type="EMBL" id="Z36166">
    <property type="protein sequence ID" value="CAA85262.1"/>
    <property type="molecule type" value="Genomic_DNA"/>
</dbReference>
<dbReference type="EMBL" id="AY692789">
    <property type="protein sequence ID" value="AAT92808.1"/>
    <property type="molecule type" value="Genomic_DNA"/>
</dbReference>
<dbReference type="EMBL" id="BK006936">
    <property type="protein sequence ID" value="DAA07412.1"/>
    <property type="molecule type" value="Genomic_DNA"/>
</dbReference>
<dbReference type="PIR" id="S46179">
    <property type="entry name" value="S46179"/>
</dbReference>
<dbReference type="RefSeq" id="NP_009856.3">
    <property type="nucleotide sequence ID" value="NM_001178645.3"/>
</dbReference>
<dbReference type="SMR" id="P38157"/>
<dbReference type="BioGRID" id="32990">
    <property type="interactions" value="192"/>
</dbReference>
<dbReference type="FunCoup" id="P38157">
    <property type="interactions" value="672"/>
</dbReference>
<dbReference type="STRING" id="4932.YBR297W"/>
<dbReference type="PaxDb" id="4932-YBR297W"/>
<dbReference type="PeptideAtlas" id="P38157"/>
<dbReference type="EnsemblFungi" id="YBR297W_mRNA">
    <property type="protein sequence ID" value="YBR297W"/>
    <property type="gene ID" value="YBR297W"/>
</dbReference>
<dbReference type="GeneID" id="852600"/>
<dbReference type="KEGG" id="sce:YBR297W"/>
<dbReference type="AGR" id="SGD:S000000501"/>
<dbReference type="SGD" id="S000000501">
    <property type="gene designation" value="MAL33"/>
</dbReference>
<dbReference type="VEuPathDB" id="FungiDB:YBR297W"/>
<dbReference type="eggNOG" id="ENOG502S2FW">
    <property type="taxonomic scope" value="Eukaryota"/>
</dbReference>
<dbReference type="GeneTree" id="ENSGT00940000176316"/>
<dbReference type="HOGENOM" id="CLU_046324_0_0_1"/>
<dbReference type="InParanoid" id="P38157"/>
<dbReference type="OMA" id="AKESEYC"/>
<dbReference type="OrthoDB" id="5600212at2759"/>
<dbReference type="BioCyc" id="YEAST:G3O-29215-MONOMER"/>
<dbReference type="BioGRID-ORCS" id="852600">
    <property type="hits" value="1 hit in 10 CRISPR screens"/>
</dbReference>
<dbReference type="PRO" id="PR:P38157"/>
<dbReference type="Proteomes" id="UP000002311">
    <property type="component" value="Chromosome II"/>
</dbReference>
<dbReference type="RNAct" id="P38157">
    <property type="molecule type" value="protein"/>
</dbReference>
<dbReference type="GO" id="GO:0005634">
    <property type="term" value="C:nucleus"/>
    <property type="evidence" value="ECO:0000250"/>
    <property type="project" value="SGD"/>
</dbReference>
<dbReference type="GO" id="GO:0003677">
    <property type="term" value="F:DNA binding"/>
    <property type="evidence" value="ECO:0007669"/>
    <property type="project" value="UniProtKB-KW"/>
</dbReference>
<dbReference type="GO" id="GO:0003700">
    <property type="term" value="F:DNA-binding transcription factor activity"/>
    <property type="evidence" value="ECO:0000250"/>
    <property type="project" value="SGD"/>
</dbReference>
<dbReference type="GO" id="GO:0000981">
    <property type="term" value="F:DNA-binding transcription factor activity, RNA polymerase II-specific"/>
    <property type="evidence" value="ECO:0007669"/>
    <property type="project" value="InterPro"/>
</dbReference>
<dbReference type="GO" id="GO:0008270">
    <property type="term" value="F:zinc ion binding"/>
    <property type="evidence" value="ECO:0007669"/>
    <property type="project" value="InterPro"/>
</dbReference>
<dbReference type="GO" id="GO:0006351">
    <property type="term" value="P:DNA-templated transcription"/>
    <property type="evidence" value="ECO:0007669"/>
    <property type="project" value="InterPro"/>
</dbReference>
<dbReference type="GO" id="GO:0000023">
    <property type="term" value="P:maltose metabolic process"/>
    <property type="evidence" value="ECO:0007669"/>
    <property type="project" value="UniProtKB-KW"/>
</dbReference>
<dbReference type="GO" id="GO:0006355">
    <property type="term" value="P:regulation of DNA-templated transcription"/>
    <property type="evidence" value="ECO:0000250"/>
    <property type="project" value="SGD"/>
</dbReference>
<dbReference type="CDD" id="cd12148">
    <property type="entry name" value="fungal_TF_MHR"/>
    <property type="match status" value="1"/>
</dbReference>
<dbReference type="CDD" id="cd00067">
    <property type="entry name" value="GAL4"/>
    <property type="match status" value="1"/>
</dbReference>
<dbReference type="Gene3D" id="4.10.240.10">
    <property type="entry name" value="Zn(2)-C6 fungal-type DNA-binding domain"/>
    <property type="match status" value="1"/>
</dbReference>
<dbReference type="InterPro" id="IPR050797">
    <property type="entry name" value="Carb_Metab_Trans_Reg"/>
</dbReference>
<dbReference type="InterPro" id="IPR020448">
    <property type="entry name" value="Maltose_ferment_reg_DNA-bd"/>
</dbReference>
<dbReference type="InterPro" id="IPR007219">
    <property type="entry name" value="Transcription_factor_dom_fun"/>
</dbReference>
<dbReference type="InterPro" id="IPR036864">
    <property type="entry name" value="Zn2-C6_fun-type_DNA-bd_sf"/>
</dbReference>
<dbReference type="InterPro" id="IPR001138">
    <property type="entry name" value="Zn2Cys6_DnaBD"/>
</dbReference>
<dbReference type="PANTHER" id="PTHR31668">
    <property type="entry name" value="GLUCOSE TRANSPORT TRANSCRIPTION REGULATOR RGT1-RELATED-RELATED"/>
    <property type="match status" value="1"/>
</dbReference>
<dbReference type="PANTHER" id="PTHR31668:SF18">
    <property type="entry name" value="MALTOSE FERMENTATION REGULATORY PROTEIN MAL13-RELATED"/>
    <property type="match status" value="1"/>
</dbReference>
<dbReference type="Pfam" id="PF04082">
    <property type="entry name" value="Fungal_trans"/>
    <property type="match status" value="1"/>
</dbReference>
<dbReference type="Pfam" id="PF00172">
    <property type="entry name" value="Zn_clus"/>
    <property type="match status" value="1"/>
</dbReference>
<dbReference type="PRINTS" id="PR00054">
    <property type="entry name" value="FUNGALZNCYS"/>
</dbReference>
<dbReference type="SMART" id="SM00066">
    <property type="entry name" value="GAL4"/>
    <property type="match status" value="1"/>
</dbReference>
<dbReference type="SUPFAM" id="SSF57701">
    <property type="entry name" value="Zn2/Cys6 DNA-binding domain"/>
    <property type="match status" value="1"/>
</dbReference>
<dbReference type="PROSITE" id="PS00463">
    <property type="entry name" value="ZN2_CY6_FUNGAL_1"/>
    <property type="match status" value="1"/>
</dbReference>
<dbReference type="PROSITE" id="PS50048">
    <property type="entry name" value="ZN2_CY6_FUNGAL_2"/>
    <property type="match status" value="1"/>
</dbReference>
<reference key="1">
    <citation type="journal article" date="1994" name="EMBO J.">
        <title>Complete DNA sequence of yeast chromosome II.</title>
        <authorList>
            <person name="Feldmann H."/>
            <person name="Aigle M."/>
            <person name="Aljinovic G."/>
            <person name="Andre B."/>
            <person name="Baclet M.C."/>
            <person name="Barthe C."/>
            <person name="Baur A."/>
            <person name="Becam A.-M."/>
            <person name="Biteau N."/>
            <person name="Boles E."/>
            <person name="Brandt T."/>
            <person name="Brendel M."/>
            <person name="Brueckner M."/>
            <person name="Bussereau F."/>
            <person name="Christiansen C."/>
            <person name="Contreras R."/>
            <person name="Crouzet M."/>
            <person name="Cziepluch C."/>
            <person name="Demolis N."/>
            <person name="Delaveau T."/>
            <person name="Doignon F."/>
            <person name="Domdey H."/>
            <person name="Duesterhus S."/>
            <person name="Dubois E."/>
            <person name="Dujon B."/>
            <person name="El Bakkoury M."/>
            <person name="Entian K.-D."/>
            <person name="Feuermann M."/>
            <person name="Fiers W."/>
            <person name="Fobo G.M."/>
            <person name="Fritz C."/>
            <person name="Gassenhuber J."/>
            <person name="Glansdorff N."/>
            <person name="Goffeau A."/>
            <person name="Grivell L.A."/>
            <person name="de Haan M."/>
            <person name="Hein C."/>
            <person name="Herbert C.J."/>
            <person name="Hollenberg C.P."/>
            <person name="Holmstroem K."/>
            <person name="Jacq C."/>
            <person name="Jacquet M."/>
            <person name="Jauniaux J.-C."/>
            <person name="Jonniaux J.-L."/>
            <person name="Kallesoee T."/>
            <person name="Kiesau P."/>
            <person name="Kirchrath L."/>
            <person name="Koetter P."/>
            <person name="Korol S."/>
            <person name="Liebl S."/>
            <person name="Logghe M."/>
            <person name="Lohan A.J.E."/>
            <person name="Louis E.J."/>
            <person name="Li Z.Y."/>
            <person name="Maat M.J."/>
            <person name="Mallet L."/>
            <person name="Mannhaupt G."/>
            <person name="Messenguy F."/>
            <person name="Miosga T."/>
            <person name="Molemans F."/>
            <person name="Mueller S."/>
            <person name="Nasr F."/>
            <person name="Obermaier B."/>
            <person name="Perea J."/>
            <person name="Pierard A."/>
            <person name="Piravandi E."/>
            <person name="Pohl F.M."/>
            <person name="Pohl T.M."/>
            <person name="Potier S."/>
            <person name="Proft M."/>
            <person name="Purnelle B."/>
            <person name="Ramezani Rad M."/>
            <person name="Rieger M."/>
            <person name="Rose M."/>
            <person name="Schaaff-Gerstenschlaeger I."/>
            <person name="Scherens B."/>
            <person name="Schwarzlose C."/>
            <person name="Skala J."/>
            <person name="Slonimski P.P."/>
            <person name="Smits P.H.M."/>
            <person name="Souciet J.-L."/>
            <person name="Steensma H.Y."/>
            <person name="Stucka R."/>
            <person name="Urrestarazu L.A."/>
            <person name="van der Aart Q.J.M."/>
            <person name="Van Dyck L."/>
            <person name="Vassarotti A."/>
            <person name="Vetter I."/>
            <person name="Vierendeels F."/>
            <person name="Vissers S."/>
            <person name="Wagner G."/>
            <person name="de Wergifosse P."/>
            <person name="Wolfe K.H."/>
            <person name="Zagulski M."/>
            <person name="Zimmermann F.K."/>
            <person name="Mewes H.-W."/>
            <person name="Kleine K."/>
        </authorList>
    </citation>
    <scope>NUCLEOTIDE SEQUENCE [LARGE SCALE GENOMIC DNA]</scope>
    <source>
        <strain>ATCC 204508 / S288c</strain>
    </source>
</reference>
<reference key="2">
    <citation type="journal article" date="2014" name="G3 (Bethesda)">
        <title>The reference genome sequence of Saccharomyces cerevisiae: Then and now.</title>
        <authorList>
            <person name="Engel S.R."/>
            <person name="Dietrich F.S."/>
            <person name="Fisk D.G."/>
            <person name="Binkley G."/>
            <person name="Balakrishnan R."/>
            <person name="Costanzo M.C."/>
            <person name="Dwight S.S."/>
            <person name="Hitz B.C."/>
            <person name="Karra K."/>
            <person name="Nash R.S."/>
            <person name="Weng S."/>
            <person name="Wong E.D."/>
            <person name="Lloyd P."/>
            <person name="Skrzypek M.S."/>
            <person name="Miyasato S.R."/>
            <person name="Simison M."/>
            <person name="Cherry J.M."/>
        </authorList>
    </citation>
    <scope>GENOME REANNOTATION</scope>
    <source>
        <strain>ATCC 204508 / S288c</strain>
    </source>
</reference>
<reference key="3">
    <citation type="journal article" date="2007" name="Genome Res.">
        <title>Approaching a complete repository of sequence-verified protein-encoding clones for Saccharomyces cerevisiae.</title>
        <authorList>
            <person name="Hu Y."/>
            <person name="Rolfs A."/>
            <person name="Bhullar B."/>
            <person name="Murthy T.V.S."/>
            <person name="Zhu C."/>
            <person name="Berger M.F."/>
            <person name="Camargo A.A."/>
            <person name="Kelley F."/>
            <person name="McCarron S."/>
            <person name="Jepson D."/>
            <person name="Richardson A."/>
            <person name="Raphael J."/>
            <person name="Moreira D."/>
            <person name="Taycher E."/>
            <person name="Zuo D."/>
            <person name="Mohr S."/>
            <person name="Kane M.F."/>
            <person name="Williamson J."/>
            <person name="Simpson A.J.G."/>
            <person name="Bulyk M.L."/>
            <person name="Harlow E."/>
            <person name="Marsischky G."/>
            <person name="Kolodner R.D."/>
            <person name="LaBaer J."/>
        </authorList>
    </citation>
    <scope>NUCLEOTIDE SEQUENCE [GENOMIC DNA]</scope>
    <source>
        <strain>ATCC 204508 / S288c</strain>
    </source>
</reference>
<evidence type="ECO:0000255" key="1"/>
<evidence type="ECO:0000255" key="2">
    <source>
        <dbReference type="PROSITE-ProRule" id="PRU00227"/>
    </source>
</evidence>
<evidence type="ECO:0000305" key="3"/>